<accession>O03713</accession>
<accession>Q9TA53</accession>
<reference key="1">
    <citation type="journal article" date="1999" name="J. Mammal. Evol.">
        <title>Systematic position of the African dormouse Graphiurus (Rodentia, Gliridae) assessed from cytochrome b and 12s rRNA mitochondrial genes.</title>
        <authorList>
            <person name="Bentz S."/>
            <person name="Montgelard C."/>
        </authorList>
    </citation>
    <scope>NUCLEOTIDE SEQUENCE [GENOMIC DNA]</scope>
    <source>
        <strain>Isolate E-4964</strain>
    </source>
</reference>
<reference key="2">
    <citation type="journal article" date="1997" name="Zool. Sci.">
        <title>Phylogenetic position and geographic differentiation of the Japanese dormouse, Glirulus japonicus, revealed by variations among rDNA, mtDNA and the Sry gene.</title>
        <authorList>
            <person name="Suzuki H."/>
            <person name="Minato S."/>
            <person name="Sakurai S."/>
            <person name="Tsuchiya K."/>
            <person name="Fokin I.M."/>
        </authorList>
    </citation>
    <scope>NUCLEOTIDE SEQUENCE [GENOMIC DNA] OF 1-134</scope>
    <source>
        <strain>HS0440 / Russia</strain>
        <tissue>Liver</tissue>
    </source>
</reference>
<protein>
    <recommendedName>
        <fullName>Cytochrome b</fullName>
    </recommendedName>
    <alternativeName>
        <fullName>Complex III subunit 3</fullName>
    </alternativeName>
    <alternativeName>
        <fullName>Complex III subunit III</fullName>
    </alternativeName>
    <alternativeName>
        <fullName>Cytochrome b-c1 complex subunit 3</fullName>
    </alternativeName>
    <alternativeName>
        <fullName>Ubiquinol-cytochrome-c reductase complex cytochrome b subunit</fullName>
    </alternativeName>
</protein>
<feature type="chain" id="PRO_0000060900" description="Cytochrome b">
    <location>
        <begin position="1"/>
        <end position="379"/>
    </location>
</feature>
<feature type="transmembrane region" description="Helical" evidence="2">
    <location>
        <begin position="33"/>
        <end position="53"/>
    </location>
</feature>
<feature type="transmembrane region" description="Helical" evidence="2">
    <location>
        <begin position="77"/>
        <end position="98"/>
    </location>
</feature>
<feature type="transmembrane region" description="Helical" evidence="2">
    <location>
        <begin position="113"/>
        <end position="133"/>
    </location>
</feature>
<feature type="transmembrane region" description="Helical" evidence="2">
    <location>
        <begin position="178"/>
        <end position="198"/>
    </location>
</feature>
<feature type="transmembrane region" description="Helical" evidence="2">
    <location>
        <begin position="226"/>
        <end position="246"/>
    </location>
</feature>
<feature type="transmembrane region" description="Helical" evidence="2">
    <location>
        <begin position="288"/>
        <end position="308"/>
    </location>
</feature>
<feature type="transmembrane region" description="Helical" evidence="2">
    <location>
        <begin position="320"/>
        <end position="340"/>
    </location>
</feature>
<feature type="transmembrane region" description="Helical" evidence="2">
    <location>
        <begin position="347"/>
        <end position="367"/>
    </location>
</feature>
<feature type="binding site" description="axial binding residue" evidence="2">
    <location>
        <position position="83"/>
    </location>
    <ligand>
        <name>heme b</name>
        <dbReference type="ChEBI" id="CHEBI:60344"/>
        <label>b562</label>
    </ligand>
    <ligandPart>
        <name>Fe</name>
        <dbReference type="ChEBI" id="CHEBI:18248"/>
    </ligandPart>
</feature>
<feature type="binding site" description="axial binding residue" evidence="2">
    <location>
        <position position="97"/>
    </location>
    <ligand>
        <name>heme b</name>
        <dbReference type="ChEBI" id="CHEBI:60344"/>
        <label>b566</label>
    </ligand>
    <ligandPart>
        <name>Fe</name>
        <dbReference type="ChEBI" id="CHEBI:18248"/>
    </ligandPart>
</feature>
<feature type="binding site" description="axial binding residue" evidence="2">
    <location>
        <position position="182"/>
    </location>
    <ligand>
        <name>heme b</name>
        <dbReference type="ChEBI" id="CHEBI:60344"/>
        <label>b562</label>
    </ligand>
    <ligandPart>
        <name>Fe</name>
        <dbReference type="ChEBI" id="CHEBI:18248"/>
    </ligandPart>
</feature>
<feature type="binding site" description="axial binding residue" evidence="2">
    <location>
        <position position="196"/>
    </location>
    <ligand>
        <name>heme b</name>
        <dbReference type="ChEBI" id="CHEBI:60344"/>
        <label>b566</label>
    </ligand>
    <ligandPart>
        <name>Fe</name>
        <dbReference type="ChEBI" id="CHEBI:18248"/>
    </ligandPart>
</feature>
<feature type="binding site" evidence="2">
    <location>
        <position position="201"/>
    </location>
    <ligand>
        <name>a ubiquinone</name>
        <dbReference type="ChEBI" id="CHEBI:16389"/>
    </ligand>
</feature>
<feature type="sequence conflict" description="In Ref. 2; BAA13737." evidence="5" ref="2">
    <original>I</original>
    <variation>L</variation>
    <location>
        <position position="46"/>
    </location>
</feature>
<gene>
    <name type="primary">MT-CYB</name>
    <name type="synonym">COB</name>
    <name type="synonym">CYTB</name>
    <name type="synonym">MTCYB</name>
</gene>
<keyword id="KW-0249">Electron transport</keyword>
<keyword id="KW-0349">Heme</keyword>
<keyword id="KW-0408">Iron</keyword>
<keyword id="KW-0472">Membrane</keyword>
<keyword id="KW-0479">Metal-binding</keyword>
<keyword id="KW-0496">Mitochondrion</keyword>
<keyword id="KW-0999">Mitochondrion inner membrane</keyword>
<keyword id="KW-0679">Respiratory chain</keyword>
<keyword id="KW-0812">Transmembrane</keyword>
<keyword id="KW-1133">Transmembrane helix</keyword>
<keyword id="KW-0813">Transport</keyword>
<keyword id="KW-0830">Ubiquinone</keyword>
<evidence type="ECO:0000250" key="1"/>
<evidence type="ECO:0000250" key="2">
    <source>
        <dbReference type="UniProtKB" id="P00157"/>
    </source>
</evidence>
<evidence type="ECO:0000255" key="3">
    <source>
        <dbReference type="PROSITE-ProRule" id="PRU00967"/>
    </source>
</evidence>
<evidence type="ECO:0000255" key="4">
    <source>
        <dbReference type="PROSITE-ProRule" id="PRU00968"/>
    </source>
</evidence>
<evidence type="ECO:0000305" key="5"/>
<proteinExistence type="inferred from homology"/>
<dbReference type="EMBL" id="AJ225116">
    <property type="protein sequence ID" value="CAA12403.1"/>
    <property type="molecule type" value="Genomic_DNA"/>
</dbReference>
<dbReference type="EMBL" id="D88998">
    <property type="protein sequence ID" value="BAA13737.1"/>
    <property type="molecule type" value="Genomic_DNA"/>
</dbReference>
<dbReference type="SMR" id="O03713"/>
<dbReference type="GO" id="GO:0005743">
    <property type="term" value="C:mitochondrial inner membrane"/>
    <property type="evidence" value="ECO:0007669"/>
    <property type="project" value="UniProtKB-SubCell"/>
</dbReference>
<dbReference type="GO" id="GO:0045275">
    <property type="term" value="C:respiratory chain complex III"/>
    <property type="evidence" value="ECO:0007669"/>
    <property type="project" value="InterPro"/>
</dbReference>
<dbReference type="GO" id="GO:0046872">
    <property type="term" value="F:metal ion binding"/>
    <property type="evidence" value="ECO:0007669"/>
    <property type="project" value="UniProtKB-KW"/>
</dbReference>
<dbReference type="GO" id="GO:0008121">
    <property type="term" value="F:ubiquinol-cytochrome-c reductase activity"/>
    <property type="evidence" value="ECO:0007669"/>
    <property type="project" value="InterPro"/>
</dbReference>
<dbReference type="GO" id="GO:0006122">
    <property type="term" value="P:mitochondrial electron transport, ubiquinol to cytochrome c"/>
    <property type="evidence" value="ECO:0007669"/>
    <property type="project" value="TreeGrafter"/>
</dbReference>
<dbReference type="CDD" id="cd00290">
    <property type="entry name" value="cytochrome_b_C"/>
    <property type="match status" value="1"/>
</dbReference>
<dbReference type="CDD" id="cd00284">
    <property type="entry name" value="Cytochrome_b_N"/>
    <property type="match status" value="1"/>
</dbReference>
<dbReference type="FunFam" id="1.20.810.10:FF:000002">
    <property type="entry name" value="Cytochrome b"/>
    <property type="match status" value="1"/>
</dbReference>
<dbReference type="Gene3D" id="1.20.810.10">
    <property type="entry name" value="Cytochrome Bc1 Complex, Chain C"/>
    <property type="match status" value="1"/>
</dbReference>
<dbReference type="InterPro" id="IPR005798">
    <property type="entry name" value="Cyt_b/b6_C"/>
</dbReference>
<dbReference type="InterPro" id="IPR036150">
    <property type="entry name" value="Cyt_b/b6_C_sf"/>
</dbReference>
<dbReference type="InterPro" id="IPR005797">
    <property type="entry name" value="Cyt_b/b6_N"/>
</dbReference>
<dbReference type="InterPro" id="IPR027387">
    <property type="entry name" value="Cytb/b6-like_sf"/>
</dbReference>
<dbReference type="InterPro" id="IPR030689">
    <property type="entry name" value="Cytochrome_b"/>
</dbReference>
<dbReference type="InterPro" id="IPR048260">
    <property type="entry name" value="Cytochrome_b_C_euk/bac"/>
</dbReference>
<dbReference type="InterPro" id="IPR048259">
    <property type="entry name" value="Cytochrome_b_N_euk/bac"/>
</dbReference>
<dbReference type="InterPro" id="IPR016174">
    <property type="entry name" value="Di-haem_cyt_TM"/>
</dbReference>
<dbReference type="PANTHER" id="PTHR19271">
    <property type="entry name" value="CYTOCHROME B"/>
    <property type="match status" value="1"/>
</dbReference>
<dbReference type="PANTHER" id="PTHR19271:SF16">
    <property type="entry name" value="CYTOCHROME B"/>
    <property type="match status" value="1"/>
</dbReference>
<dbReference type="Pfam" id="PF00032">
    <property type="entry name" value="Cytochrom_B_C"/>
    <property type="match status" value="1"/>
</dbReference>
<dbReference type="Pfam" id="PF00033">
    <property type="entry name" value="Cytochrome_B"/>
    <property type="match status" value="1"/>
</dbReference>
<dbReference type="PIRSF" id="PIRSF038885">
    <property type="entry name" value="COB"/>
    <property type="match status" value="1"/>
</dbReference>
<dbReference type="SUPFAM" id="SSF81648">
    <property type="entry name" value="a domain/subunit of cytochrome bc1 complex (Ubiquinol-cytochrome c reductase)"/>
    <property type="match status" value="1"/>
</dbReference>
<dbReference type="SUPFAM" id="SSF81342">
    <property type="entry name" value="Transmembrane di-heme cytochromes"/>
    <property type="match status" value="1"/>
</dbReference>
<dbReference type="PROSITE" id="PS51003">
    <property type="entry name" value="CYTB_CTER"/>
    <property type="match status" value="1"/>
</dbReference>
<dbReference type="PROSITE" id="PS51002">
    <property type="entry name" value="CYTB_NTER"/>
    <property type="match status" value="1"/>
</dbReference>
<geneLocation type="mitochondrion"/>
<comment type="function">
    <text evidence="2">Component of the ubiquinol-cytochrome c reductase complex (complex III or cytochrome b-c1 complex) that is part of the mitochondrial respiratory chain. The b-c1 complex mediates electron transfer from ubiquinol to cytochrome c. Contributes to the generation of a proton gradient across the mitochondrial membrane that is then used for ATP synthesis.</text>
</comment>
<comment type="cofactor">
    <cofactor evidence="2">
        <name>heme b</name>
        <dbReference type="ChEBI" id="CHEBI:60344"/>
    </cofactor>
    <text evidence="2">Binds 2 heme b groups non-covalently.</text>
</comment>
<comment type="subunit">
    <text evidence="2">The cytochrome bc1 complex contains 11 subunits: 3 respiratory subunits (MT-CYB, CYC1 and UQCRFS1), 2 core proteins (UQCRC1 and UQCRC2) and 6 low-molecular weight proteins (UQCRH/QCR6, UQCRB/QCR7, UQCRQ/QCR8, UQCR10/QCR9, UQCR11/QCR10 and a cleavage product of UQCRFS1). This cytochrome bc1 complex then forms a dimer.</text>
</comment>
<comment type="subcellular location">
    <subcellularLocation>
        <location evidence="2">Mitochondrion inner membrane</location>
        <topology evidence="2">Multi-pass membrane protein</topology>
    </subcellularLocation>
</comment>
<comment type="miscellaneous">
    <text evidence="1">Heme 1 (or BL or b562) is low-potential and absorbs at about 562 nm, and heme 2 (or BH or b566) is high-potential and absorbs at about 566 nm.</text>
</comment>
<comment type="similarity">
    <text evidence="3 4">Belongs to the cytochrome b family.</text>
</comment>
<comment type="caution">
    <text evidence="2">The full-length protein contains only eight transmembrane helices, not nine as predicted by bioinformatics tools.</text>
</comment>
<sequence>MTNIRKTHPLMKIINHSFIDLPTPSNISAWWNFGSLLGACLGIQIITGLFLAMHYTSDTATAFSSVTHICRDVNYGWLIRYMHANGASMFFICLFLHVGRGVYYGSYSYTETWNIGIILLFTVMATAFMGYVLPWGQMSFWGATVITNLLSAIPYIGTTLVEWIWGGFSVDKATLTRFFAFHFILPFIIAALVMVHLLFLHETGSNNPSGLNSDSDKIPFHPYFTIKDFLGLLLLISILMSLVLFSPDLLGDPDNYTPANPLSTPPHIKPEWYFLFAYAILRSIPNKLGGVLALVFSILILAILPLLQFSKQRSMMFRPLSQCLFWILTADLLTLTWIGGQPVEHPFIIIGQLASILYFSIILILFPMFSLLENKLLKW</sequence>
<organism>
    <name type="scientific">Dryomys nitedula</name>
    <name type="common">Forest dormouse</name>
    <dbReference type="NCBI Taxonomy" id="55145"/>
    <lineage>
        <taxon>Eukaryota</taxon>
        <taxon>Metazoa</taxon>
        <taxon>Chordata</taxon>
        <taxon>Craniata</taxon>
        <taxon>Vertebrata</taxon>
        <taxon>Euteleostomi</taxon>
        <taxon>Mammalia</taxon>
        <taxon>Eutheria</taxon>
        <taxon>Euarchontoglires</taxon>
        <taxon>Glires</taxon>
        <taxon>Rodentia</taxon>
        <taxon>Sciuromorpha</taxon>
        <taxon>Gliridae</taxon>
        <taxon>Leithiinae</taxon>
        <taxon>Dryomys</taxon>
    </lineage>
</organism>
<name>CYB_DRYNI</name>